<dbReference type="EMBL" id="AE016817">
    <property type="protein sequence ID" value="AAS52330.1"/>
    <property type="molecule type" value="Genomic_DNA"/>
</dbReference>
<dbReference type="RefSeq" id="NP_984506.1">
    <property type="nucleotide sequence ID" value="NM_209859.1"/>
</dbReference>
<dbReference type="SMR" id="Q758W7"/>
<dbReference type="FunCoup" id="Q758W7">
    <property type="interactions" value="183"/>
</dbReference>
<dbReference type="STRING" id="284811.Q758W7"/>
<dbReference type="EnsemblFungi" id="AAS52330">
    <property type="protein sequence ID" value="AAS52330"/>
    <property type="gene ID" value="AGOS_ADR411W"/>
</dbReference>
<dbReference type="GeneID" id="4620671"/>
<dbReference type="KEGG" id="ago:AGOS_ADR411W"/>
<dbReference type="eggNOG" id="KOG3194">
    <property type="taxonomic scope" value="Eukaryota"/>
</dbReference>
<dbReference type="HOGENOM" id="CLU_057555_0_0_1"/>
<dbReference type="InParanoid" id="Q758W7"/>
<dbReference type="OMA" id="VHLEHIT"/>
<dbReference type="OrthoDB" id="337581at2759"/>
<dbReference type="Proteomes" id="UP000000591">
    <property type="component" value="Chromosome IV"/>
</dbReference>
<dbReference type="GO" id="GO:0030896">
    <property type="term" value="C:checkpoint clamp complex"/>
    <property type="evidence" value="ECO:0000318"/>
    <property type="project" value="GO_Central"/>
</dbReference>
<dbReference type="GO" id="GO:0003684">
    <property type="term" value="F:damaged DNA binding"/>
    <property type="evidence" value="ECO:0007669"/>
    <property type="project" value="InterPro"/>
</dbReference>
<dbReference type="GO" id="GO:0003690">
    <property type="term" value="F:double-stranded DNA binding"/>
    <property type="evidence" value="ECO:0007669"/>
    <property type="project" value="EnsemblFungi"/>
</dbReference>
<dbReference type="GO" id="GO:0004518">
    <property type="term" value="F:nuclease activity"/>
    <property type="evidence" value="ECO:0007669"/>
    <property type="project" value="UniProtKB-KW"/>
</dbReference>
<dbReference type="GO" id="GO:0000077">
    <property type="term" value="P:DNA damage checkpoint signaling"/>
    <property type="evidence" value="ECO:0000318"/>
    <property type="project" value="GO_Central"/>
</dbReference>
<dbReference type="GO" id="GO:0006281">
    <property type="term" value="P:DNA repair"/>
    <property type="evidence" value="ECO:0000318"/>
    <property type="project" value="GO_Central"/>
</dbReference>
<dbReference type="GO" id="GO:0006302">
    <property type="term" value="P:double-strand break repair"/>
    <property type="evidence" value="ECO:0007669"/>
    <property type="project" value="EnsemblFungi"/>
</dbReference>
<dbReference type="GO" id="GO:0007131">
    <property type="term" value="P:reciprocal meiotic recombination"/>
    <property type="evidence" value="ECO:0007669"/>
    <property type="project" value="EnsemblFungi"/>
</dbReference>
<dbReference type="CDD" id="cd00577">
    <property type="entry name" value="PCNA"/>
    <property type="match status" value="1"/>
</dbReference>
<dbReference type="FunFam" id="3.70.10.10:FF:000017">
    <property type="entry name" value="DNA damage checkpoint control protein RAD17"/>
    <property type="match status" value="1"/>
</dbReference>
<dbReference type="Gene3D" id="3.70.10.10">
    <property type="match status" value="1"/>
</dbReference>
<dbReference type="InterPro" id="IPR016587">
    <property type="entry name" value="Rad17"/>
</dbReference>
<dbReference type="InterPro" id="IPR003021">
    <property type="entry name" value="Rad1_Rec1_Rad17"/>
</dbReference>
<dbReference type="PANTHER" id="PTHR10870">
    <property type="entry name" value="CELL CYCLE CHECKPOINT PROTEIN RAD1"/>
    <property type="match status" value="1"/>
</dbReference>
<dbReference type="PANTHER" id="PTHR10870:SF0">
    <property type="entry name" value="CELL CYCLE CHECKPOINT PROTEIN RAD1"/>
    <property type="match status" value="1"/>
</dbReference>
<dbReference type="Pfam" id="PF02144">
    <property type="entry name" value="Rad1"/>
    <property type="match status" value="1"/>
</dbReference>
<dbReference type="PIRSF" id="PIRSF011769">
    <property type="entry name" value="Cell_cycle_RAD17"/>
    <property type="match status" value="1"/>
</dbReference>
<dbReference type="PRINTS" id="PR01245">
    <property type="entry name" value="RAD1REC1"/>
</dbReference>
<evidence type="ECO:0000250" key="1"/>
<evidence type="ECO:0000256" key="2">
    <source>
        <dbReference type="SAM" id="MobiDB-lite"/>
    </source>
</evidence>
<evidence type="ECO:0000305" key="3"/>
<reference key="1">
    <citation type="journal article" date="2004" name="Science">
        <title>The Ashbya gossypii genome as a tool for mapping the ancient Saccharomyces cerevisiae genome.</title>
        <authorList>
            <person name="Dietrich F.S."/>
            <person name="Voegeli S."/>
            <person name="Brachat S."/>
            <person name="Lerch A."/>
            <person name="Gates K."/>
            <person name="Steiner S."/>
            <person name="Mohr C."/>
            <person name="Poehlmann R."/>
            <person name="Luedi P."/>
            <person name="Choi S."/>
            <person name="Wing R.A."/>
            <person name="Flavier A."/>
            <person name="Gaffney T.D."/>
            <person name="Philippsen P."/>
        </authorList>
    </citation>
    <scope>NUCLEOTIDE SEQUENCE [LARGE SCALE GENOMIC DNA]</scope>
    <source>
        <strain>ATCC 10895 / CBS 109.51 / FGSC 9923 / NRRL Y-1056</strain>
    </source>
</reference>
<reference key="2">
    <citation type="journal article" date="2013" name="G3 (Bethesda)">
        <title>Genomes of Ashbya fungi isolated from insects reveal four mating-type loci, numerous translocations, lack of transposons, and distinct gene duplications.</title>
        <authorList>
            <person name="Dietrich F.S."/>
            <person name="Voegeli S."/>
            <person name="Kuo S."/>
            <person name="Philippsen P."/>
        </authorList>
    </citation>
    <scope>GENOME REANNOTATION</scope>
    <source>
        <strain>ATCC 10895 / CBS 109.51 / FGSC 9923 / NRRL Y-1056</strain>
    </source>
</reference>
<comment type="function">
    <text evidence="1">Component of the checkpoint clamp complex involved in the surveillance mechanism that allows the DNA repair pathways to act to restore the integrity of the DNA prior to DNA synthesis or separation of the replicated chromosomes.</text>
</comment>
<comment type="subunit">
    <text evidence="1">Component of the checkpoint clamp complex composed of DDC1, MEC3 and RAD17.</text>
</comment>
<comment type="subcellular location">
    <subcellularLocation>
        <location evidence="3">Nucleus</location>
    </subcellularLocation>
</comment>
<comment type="similarity">
    <text evidence="3">Belongs to the rad1 family.</text>
</comment>
<gene>
    <name type="primary">RAD17</name>
    <name type="ordered locus">ADR411W</name>
</gene>
<organism>
    <name type="scientific">Eremothecium gossypii (strain ATCC 10895 / CBS 109.51 / FGSC 9923 / NRRL Y-1056)</name>
    <name type="common">Yeast</name>
    <name type="synonym">Ashbya gossypii</name>
    <dbReference type="NCBI Taxonomy" id="284811"/>
    <lineage>
        <taxon>Eukaryota</taxon>
        <taxon>Fungi</taxon>
        <taxon>Dikarya</taxon>
        <taxon>Ascomycota</taxon>
        <taxon>Saccharomycotina</taxon>
        <taxon>Saccharomycetes</taxon>
        <taxon>Saccharomycetales</taxon>
        <taxon>Saccharomycetaceae</taxon>
        <taxon>Eremothecium</taxon>
    </lineage>
</organism>
<feature type="chain" id="PRO_0000239640" description="DNA damage checkpoint control protein RAD17">
    <location>
        <begin position="1"/>
        <end position="389"/>
    </location>
</feature>
<feature type="region of interest" description="Disordered" evidence="2">
    <location>
        <begin position="358"/>
        <end position="389"/>
    </location>
</feature>
<feature type="compositionally biased region" description="Polar residues" evidence="2">
    <location>
        <begin position="380"/>
        <end position="389"/>
    </location>
</feature>
<sequence>MLESTALFSATTIHLDRLMCAFNCMTPFGQRDDVLITIDRDGLTFIRQNNHAAEIQLFLAKELFQYYSIREGFEGEIQLCMKLNHLLDTVSVANRDKDDVVECTLSYDGEGTPFMLILEDSMITEQVEYATYLVGEMDRTGLELDRARLEFECILKGDVLYSALRDLREIGCKECYLYIVTSSRARPMFALVSRGQLGLSKIILPSERSVLEKLEVYENDSTTLIHDAPVIGLFDFAALDKLRPSTKIASKVLIRKDVHGLLAVNILSDTNAILVPEKRELIRASRSVSAEYPTVVIEVFLLEKASVGDIDVRDVHQLMLTSPAHRRSGFADSGSRIVSVTPTATSAAHTGAGSLLGLAPPSAFPAEETQDPDESYHPAPSNTDIPLFL</sequence>
<proteinExistence type="inferred from homology"/>
<accession>Q758W7</accession>
<name>RAD17_EREGS</name>
<protein>
    <recommendedName>
        <fullName>DNA damage checkpoint control protein RAD17</fullName>
    </recommendedName>
</protein>
<keyword id="KW-0227">DNA damage</keyword>
<keyword id="KW-0234">DNA repair</keyword>
<keyword id="KW-0238">DNA-binding</keyword>
<keyword id="KW-0378">Hydrolase</keyword>
<keyword id="KW-0540">Nuclease</keyword>
<keyword id="KW-0539">Nucleus</keyword>
<keyword id="KW-1185">Reference proteome</keyword>